<accession>Q9D1D4</accession>
<accession>Q3U7I7</accession>
<accession>Q6P227</accession>
<accession>Q922U8</accession>
<keyword id="KW-0025">Alternative splicing</keyword>
<keyword id="KW-1003">Cell membrane</keyword>
<keyword id="KW-0968">Cytoplasmic vesicle</keyword>
<keyword id="KW-0256">Endoplasmic reticulum</keyword>
<keyword id="KW-0931">ER-Golgi transport</keyword>
<keyword id="KW-0325">Glycoprotein</keyword>
<keyword id="KW-0333">Golgi apparatus</keyword>
<keyword id="KW-0472">Membrane</keyword>
<keyword id="KW-0488">Methylation</keyword>
<keyword id="KW-0653">Protein transport</keyword>
<keyword id="KW-1185">Reference proteome</keyword>
<keyword id="KW-0732">Signal</keyword>
<keyword id="KW-0812">Transmembrane</keyword>
<keyword id="KW-1133">Transmembrane helix</keyword>
<keyword id="KW-0813">Transport</keyword>
<dbReference type="EMBL" id="AK003676">
    <property type="protein sequence ID" value="BAB22932.1"/>
    <property type="molecule type" value="mRNA"/>
</dbReference>
<dbReference type="EMBL" id="AK084117">
    <property type="protein sequence ID" value="BAC39119.1"/>
    <property type="molecule type" value="mRNA"/>
</dbReference>
<dbReference type="EMBL" id="AK150605">
    <property type="protein sequence ID" value="BAE29697.1"/>
    <property type="molecule type" value="mRNA"/>
</dbReference>
<dbReference type="EMBL" id="AK152643">
    <property type="protein sequence ID" value="BAE31382.1"/>
    <property type="molecule type" value="mRNA"/>
</dbReference>
<dbReference type="EMBL" id="AK152656">
    <property type="protein sequence ID" value="BAE31393.1"/>
    <property type="molecule type" value="mRNA"/>
</dbReference>
<dbReference type="EMBL" id="BC006774">
    <property type="protein sequence ID" value="AAH06774.1"/>
    <property type="molecule type" value="mRNA"/>
</dbReference>
<dbReference type="EMBL" id="BC064755">
    <property type="protein sequence ID" value="AAH64755.1"/>
    <property type="molecule type" value="mRNA"/>
</dbReference>
<dbReference type="EMBL" id="BC085097">
    <property type="protein sequence ID" value="AAH85097.1"/>
    <property type="molecule type" value="mRNA"/>
</dbReference>
<dbReference type="CCDS" id="CCDS36498.1">
    <molecule id="Q9D1D4-1"/>
</dbReference>
<dbReference type="RefSeq" id="NP_081051.1">
    <molecule id="Q9D1D4-1"/>
    <property type="nucleotide sequence ID" value="NM_026775.4"/>
</dbReference>
<dbReference type="SMR" id="Q9D1D4"/>
<dbReference type="BioGRID" id="212936">
    <property type="interactions" value="81"/>
</dbReference>
<dbReference type="CORUM" id="Q9D1D4"/>
<dbReference type="FunCoup" id="Q9D1D4">
    <property type="interactions" value="3740"/>
</dbReference>
<dbReference type="IntAct" id="Q9D1D4">
    <property type="interactions" value="75"/>
</dbReference>
<dbReference type="MINT" id="Q9D1D4"/>
<dbReference type="STRING" id="10090.ENSMUSP00000037583"/>
<dbReference type="GlyCosmos" id="Q9D1D4">
    <property type="glycosylation" value="1 site, No reported glycans"/>
</dbReference>
<dbReference type="GlyGen" id="Q9D1D4">
    <property type="glycosylation" value="2 sites, 1 N-linked glycan (1 site), 1 O-linked glycan (1 site)"/>
</dbReference>
<dbReference type="iPTMnet" id="Q9D1D4"/>
<dbReference type="MetOSite" id="Q9D1D4"/>
<dbReference type="PhosphoSitePlus" id="Q9D1D4"/>
<dbReference type="SwissPalm" id="Q9D1D4"/>
<dbReference type="jPOST" id="Q9D1D4"/>
<dbReference type="PaxDb" id="10090-ENSMUSP00000037583"/>
<dbReference type="PeptideAtlas" id="Q9D1D4"/>
<dbReference type="ProteomicsDB" id="262838">
    <molecule id="Q9D1D4-1"/>
</dbReference>
<dbReference type="ProteomicsDB" id="262839">
    <molecule id="Q9D1D4-2"/>
</dbReference>
<dbReference type="Pumba" id="Q9D1D4"/>
<dbReference type="Antibodypedia" id="25817">
    <property type="antibodies" value="441 antibodies from 34 providers"/>
</dbReference>
<dbReference type="DNASU" id="68581"/>
<dbReference type="Ensembl" id="ENSMUST00000040766.9">
    <molecule id="Q9D1D4-1"/>
    <property type="protein sequence ID" value="ENSMUSP00000037583.8"/>
    <property type="gene ID" value="ENSMUSG00000021248.10"/>
</dbReference>
<dbReference type="GeneID" id="68581"/>
<dbReference type="KEGG" id="mmu:68581"/>
<dbReference type="UCSC" id="uc007ogy.1">
    <molecule id="Q9D1D4-2"/>
    <property type="organism name" value="mouse"/>
</dbReference>
<dbReference type="UCSC" id="uc007ogz.1">
    <molecule id="Q9D1D4-1"/>
    <property type="organism name" value="mouse"/>
</dbReference>
<dbReference type="AGR" id="MGI:1915831"/>
<dbReference type="CTD" id="10972"/>
<dbReference type="MGI" id="MGI:1915831">
    <property type="gene designation" value="Tmed10"/>
</dbReference>
<dbReference type="VEuPathDB" id="HostDB:ENSMUSG00000021248"/>
<dbReference type="eggNOG" id="KOG1691">
    <property type="taxonomic scope" value="Eukaryota"/>
</dbReference>
<dbReference type="GeneTree" id="ENSGT00550000074954"/>
<dbReference type="HOGENOM" id="CLU_066963_3_1_1"/>
<dbReference type="InParanoid" id="Q9D1D4"/>
<dbReference type="OMA" id="DVFEACF"/>
<dbReference type="OrthoDB" id="759142at2759"/>
<dbReference type="PhylomeDB" id="Q9D1D4"/>
<dbReference type="TreeFam" id="TF313729"/>
<dbReference type="Reactome" id="R-MMU-204005">
    <property type="pathway name" value="COPII-mediated vesicle transport"/>
</dbReference>
<dbReference type="Reactome" id="R-MMU-5694530">
    <property type="pathway name" value="Cargo concentration in the ER"/>
</dbReference>
<dbReference type="Reactome" id="R-MMU-6807878">
    <property type="pathway name" value="COPI-mediated anterograde transport"/>
</dbReference>
<dbReference type="Reactome" id="R-MMU-6811434">
    <property type="pathway name" value="COPI-dependent Golgi-to-ER retrograde traffic"/>
</dbReference>
<dbReference type="BioGRID-ORCS" id="68581">
    <property type="hits" value="17 hits in 77 CRISPR screens"/>
</dbReference>
<dbReference type="CD-CODE" id="CE726F99">
    <property type="entry name" value="Postsynaptic density"/>
</dbReference>
<dbReference type="ChiTaRS" id="Tmed10">
    <property type="organism name" value="mouse"/>
</dbReference>
<dbReference type="PRO" id="PR:Q9D1D4"/>
<dbReference type="Proteomes" id="UP000000589">
    <property type="component" value="Chromosome 12"/>
</dbReference>
<dbReference type="RNAct" id="Q9D1D4">
    <property type="molecule type" value="protein"/>
</dbReference>
<dbReference type="Bgee" id="ENSMUSG00000021248">
    <property type="expression patterns" value="Expressed in ectoplacental cone and 255 other cell types or tissues"/>
</dbReference>
<dbReference type="ExpressionAtlas" id="Q9D1D4">
    <property type="expression patterns" value="baseline and differential"/>
</dbReference>
<dbReference type="GO" id="GO:0005801">
    <property type="term" value="C:cis-Golgi network"/>
    <property type="evidence" value="ECO:0000250"/>
    <property type="project" value="HGNC-UCL"/>
</dbReference>
<dbReference type="GO" id="GO:0005789">
    <property type="term" value="C:endoplasmic reticulum membrane"/>
    <property type="evidence" value="ECO:0007669"/>
    <property type="project" value="UniProtKB-SubCell"/>
</dbReference>
<dbReference type="GO" id="GO:0005793">
    <property type="term" value="C:endoplasmic reticulum-Golgi intermediate compartment"/>
    <property type="evidence" value="ECO:0000250"/>
    <property type="project" value="UniProtKB"/>
</dbReference>
<dbReference type="GO" id="GO:0033116">
    <property type="term" value="C:endoplasmic reticulum-Golgi intermediate compartment membrane"/>
    <property type="evidence" value="ECO:0007669"/>
    <property type="project" value="UniProtKB-SubCell"/>
</dbReference>
<dbReference type="GO" id="GO:0070765">
    <property type="term" value="C:gamma-secretase complex"/>
    <property type="evidence" value="ECO:0000314"/>
    <property type="project" value="MGI"/>
</dbReference>
<dbReference type="GO" id="GO:0000139">
    <property type="term" value="C:Golgi membrane"/>
    <property type="evidence" value="ECO:0007669"/>
    <property type="project" value="UniProtKB-SubCell"/>
</dbReference>
<dbReference type="GO" id="GO:0042470">
    <property type="term" value="C:melanosome"/>
    <property type="evidence" value="ECO:0007669"/>
    <property type="project" value="UniProtKB-SubCell"/>
</dbReference>
<dbReference type="GO" id="GO:0016020">
    <property type="term" value="C:membrane"/>
    <property type="evidence" value="ECO:0000250"/>
    <property type="project" value="HGNC-UCL"/>
</dbReference>
<dbReference type="GO" id="GO:0005886">
    <property type="term" value="C:plasma membrane"/>
    <property type="evidence" value="ECO:0000250"/>
    <property type="project" value="UniProtKB"/>
</dbReference>
<dbReference type="GO" id="GO:0030667">
    <property type="term" value="C:secretory granule membrane"/>
    <property type="evidence" value="ECO:0000314"/>
    <property type="project" value="UniProtKB"/>
</dbReference>
<dbReference type="GO" id="GO:0030140">
    <property type="term" value="C:trans-Golgi network transport vesicle"/>
    <property type="evidence" value="ECO:0000250"/>
    <property type="project" value="UniProtKB"/>
</dbReference>
<dbReference type="GO" id="GO:0030658">
    <property type="term" value="C:transport vesicle membrane"/>
    <property type="evidence" value="ECO:0007669"/>
    <property type="project" value="UniProtKB-SubCell"/>
</dbReference>
<dbReference type="GO" id="GO:0042589">
    <property type="term" value="C:zymogen granule membrane"/>
    <property type="evidence" value="ECO:0000314"/>
    <property type="project" value="HGNC-UCL"/>
</dbReference>
<dbReference type="GO" id="GO:0008320">
    <property type="term" value="F:protein transmembrane transporter activity"/>
    <property type="evidence" value="ECO:0000250"/>
    <property type="project" value="UniProtKB"/>
</dbReference>
<dbReference type="GO" id="GO:0019905">
    <property type="term" value="F:syntaxin binding"/>
    <property type="evidence" value="ECO:0007669"/>
    <property type="project" value="Ensembl"/>
</dbReference>
<dbReference type="GO" id="GO:0035964">
    <property type="term" value="P:COPI-coated vesicle budding"/>
    <property type="evidence" value="ECO:0000250"/>
    <property type="project" value="UniProtKB"/>
</dbReference>
<dbReference type="GO" id="GO:0106273">
    <property type="term" value="P:cytosol to ERGIC protein transport"/>
    <property type="evidence" value="ECO:0000250"/>
    <property type="project" value="UniProtKB"/>
</dbReference>
<dbReference type="GO" id="GO:0007030">
    <property type="term" value="P:Golgi organization"/>
    <property type="evidence" value="ECO:0000314"/>
    <property type="project" value="UniProtKB"/>
</dbReference>
<dbReference type="GO" id="GO:0006886">
    <property type="term" value="P:intracellular protein transport"/>
    <property type="evidence" value="ECO:0000304"/>
    <property type="project" value="HGNC-UCL"/>
</dbReference>
<dbReference type="GO" id="GO:0032732">
    <property type="term" value="P:positive regulation of interleukin-1 production"/>
    <property type="evidence" value="ECO:0000315"/>
    <property type="project" value="UniProtKB"/>
</dbReference>
<dbReference type="GO" id="GO:0050714">
    <property type="term" value="P:positive regulation of protein secretion"/>
    <property type="evidence" value="ECO:0000315"/>
    <property type="project" value="UniProtKB"/>
</dbReference>
<dbReference type="GO" id="GO:0106272">
    <property type="term" value="P:protein localization to ERGIC"/>
    <property type="evidence" value="ECO:0000250"/>
    <property type="project" value="UniProtKB"/>
</dbReference>
<dbReference type="GO" id="GO:0045055">
    <property type="term" value="P:regulated exocytosis"/>
    <property type="evidence" value="ECO:0000270"/>
    <property type="project" value="HGNC-UCL"/>
</dbReference>
<dbReference type="GO" id="GO:1902003">
    <property type="term" value="P:regulation of amyloid-beta formation"/>
    <property type="evidence" value="ECO:0007669"/>
    <property type="project" value="Ensembl"/>
</dbReference>
<dbReference type="GO" id="GO:0006890">
    <property type="term" value="P:retrograde vesicle-mediated transport, Golgi to endoplasmic reticulum"/>
    <property type="evidence" value="ECO:0000250"/>
    <property type="project" value="UniProtKB"/>
</dbReference>
<dbReference type="GO" id="GO:0048199">
    <property type="term" value="P:vesicle targeting, to, from or within Golgi"/>
    <property type="evidence" value="ECO:0000270"/>
    <property type="project" value="HGNC-UCL"/>
</dbReference>
<dbReference type="InterPro" id="IPR015720">
    <property type="entry name" value="Emp24-like"/>
</dbReference>
<dbReference type="InterPro" id="IPR009038">
    <property type="entry name" value="GOLD_dom"/>
</dbReference>
<dbReference type="PANTHER" id="PTHR22811">
    <property type="entry name" value="TRANSMEMBRANE EMP24 DOMAIN-CONTAINING PROTEIN"/>
    <property type="match status" value="1"/>
</dbReference>
<dbReference type="Pfam" id="PF01105">
    <property type="entry name" value="EMP24_GP25L"/>
    <property type="match status" value="1"/>
</dbReference>
<dbReference type="SMART" id="SM01190">
    <property type="entry name" value="EMP24_GP25L"/>
    <property type="match status" value="1"/>
</dbReference>
<dbReference type="PROSITE" id="PS50866">
    <property type="entry name" value="GOLD"/>
    <property type="match status" value="1"/>
</dbReference>
<sequence length="219" mass="24911">MSGLFGPLSRPGPLPSAWLFLLLLGPSSVLGISFHLPVNSRKCLREEIHKDLLVTGAYEITDQSGGAGGLRTHLKITDSAGHILYAKEDATKGKFAFTTEDYDMFEVCFESKGTGRIPDQLVILDMKHGVEAKNYEEIAKVEKLKPLEVELRRLEDLSESIVNDFAYMKKREEEMRDTNESTNTRVLYFSIFSMFCLIGLATWQVFYLRRFFKAKKLIE</sequence>
<organism>
    <name type="scientific">Mus musculus</name>
    <name type="common">Mouse</name>
    <dbReference type="NCBI Taxonomy" id="10090"/>
    <lineage>
        <taxon>Eukaryota</taxon>
        <taxon>Metazoa</taxon>
        <taxon>Chordata</taxon>
        <taxon>Craniata</taxon>
        <taxon>Vertebrata</taxon>
        <taxon>Euteleostomi</taxon>
        <taxon>Mammalia</taxon>
        <taxon>Eutheria</taxon>
        <taxon>Euarchontoglires</taxon>
        <taxon>Glires</taxon>
        <taxon>Rodentia</taxon>
        <taxon>Myomorpha</taxon>
        <taxon>Muroidea</taxon>
        <taxon>Muridae</taxon>
        <taxon>Murinae</taxon>
        <taxon>Mus</taxon>
        <taxon>Mus</taxon>
    </lineage>
</organism>
<gene>
    <name evidence="12" type="primary">Tmed10</name>
    <name type="synonym">Tmp21</name>
</gene>
<name>TMEDA_MOUSE</name>
<evidence type="ECO:0000250" key="1"/>
<evidence type="ECO:0000250" key="2">
    <source>
        <dbReference type="UniProtKB" id="P49755"/>
    </source>
</evidence>
<evidence type="ECO:0000250" key="3">
    <source>
        <dbReference type="UniProtKB" id="Q28735"/>
    </source>
</evidence>
<evidence type="ECO:0000250" key="4">
    <source>
        <dbReference type="UniProtKB" id="Q63584"/>
    </source>
</evidence>
<evidence type="ECO:0000255" key="5"/>
<evidence type="ECO:0000255" key="6">
    <source>
        <dbReference type="PROSITE-ProRule" id="PRU00096"/>
    </source>
</evidence>
<evidence type="ECO:0000269" key="7">
    <source>
    </source>
</evidence>
<evidence type="ECO:0000269" key="8">
    <source>
    </source>
</evidence>
<evidence type="ECO:0000269" key="9">
    <source>
    </source>
</evidence>
<evidence type="ECO:0000303" key="10">
    <source>
    </source>
</evidence>
<evidence type="ECO:0000305" key="11"/>
<evidence type="ECO:0000312" key="12">
    <source>
        <dbReference type="MGI" id="MGI:1915831"/>
    </source>
</evidence>
<feature type="signal peptide" evidence="1">
    <location>
        <begin position="1"/>
        <end position="31"/>
    </location>
</feature>
<feature type="chain" id="PRO_0000010401" description="Transmembrane emp24 domain-containing protein 10">
    <location>
        <begin position="32"/>
        <end position="219"/>
    </location>
</feature>
<feature type="topological domain" description="Lumenal" evidence="11">
    <location>
        <begin position="32"/>
        <end position="185"/>
    </location>
</feature>
<feature type="transmembrane region" description="Helical" evidence="5">
    <location>
        <begin position="186"/>
        <end position="206"/>
    </location>
</feature>
<feature type="topological domain" description="Cytoplasmic" evidence="11">
    <location>
        <begin position="207"/>
        <end position="219"/>
    </location>
</feature>
<feature type="domain" description="GOLD" evidence="6">
    <location>
        <begin position="41"/>
        <end position="193"/>
    </location>
</feature>
<feature type="region of interest" description="Required for interaction with STX17" evidence="1">
    <location>
        <begin position="1"/>
        <end position="142"/>
    </location>
</feature>
<feature type="region of interest" description="Required for TMED10 and TMED2 cis-Golgi network localization" evidence="1">
    <location>
        <begin position="147"/>
        <end position="178"/>
    </location>
</feature>
<feature type="region of interest" description="Interaction with COPG1" evidence="1">
    <location>
        <begin position="204"/>
        <end position="219"/>
    </location>
</feature>
<feature type="region of interest" description="Interaction with ARF1 and IL1B" evidence="2">
    <location>
        <begin position="207"/>
        <end position="219"/>
    </location>
</feature>
<feature type="short sequence motif" description="COPI vesicle coat-binding" evidence="5">
    <location>
        <begin position="211"/>
        <end position="219"/>
    </location>
</feature>
<feature type="short sequence motif" description="COPII vesicle coat-binding" evidence="5">
    <location>
        <begin position="211"/>
        <end position="212"/>
    </location>
</feature>
<feature type="modified residue" description="Dimethylated arginine" evidence="4">
    <location>
        <position position="171"/>
    </location>
</feature>
<feature type="modified residue" description="Dimethylated arginine" evidence="4">
    <location>
        <position position="176"/>
    </location>
</feature>
<feature type="glycosylation site" description="N-linked (GlcNAc...) asparagine" evidence="5">
    <location>
        <position position="179"/>
    </location>
</feature>
<feature type="splice variant" id="VSP_013582" description="In isoform 2." evidence="10">
    <location>
        <begin position="1"/>
        <end position="125"/>
    </location>
</feature>
<feature type="sequence conflict" description="In Ref. 2; AAH64755." evidence="11" ref="2">
    <original>C</original>
    <variation>Y</variation>
    <location>
        <position position="196"/>
    </location>
</feature>
<reference key="1">
    <citation type="journal article" date="2005" name="Science">
        <title>The transcriptional landscape of the mammalian genome.</title>
        <authorList>
            <person name="Carninci P."/>
            <person name="Kasukawa T."/>
            <person name="Katayama S."/>
            <person name="Gough J."/>
            <person name="Frith M.C."/>
            <person name="Maeda N."/>
            <person name="Oyama R."/>
            <person name="Ravasi T."/>
            <person name="Lenhard B."/>
            <person name="Wells C."/>
            <person name="Kodzius R."/>
            <person name="Shimokawa K."/>
            <person name="Bajic V.B."/>
            <person name="Brenner S.E."/>
            <person name="Batalov S."/>
            <person name="Forrest A.R."/>
            <person name="Zavolan M."/>
            <person name="Davis M.J."/>
            <person name="Wilming L.G."/>
            <person name="Aidinis V."/>
            <person name="Allen J.E."/>
            <person name="Ambesi-Impiombato A."/>
            <person name="Apweiler R."/>
            <person name="Aturaliya R.N."/>
            <person name="Bailey T.L."/>
            <person name="Bansal M."/>
            <person name="Baxter L."/>
            <person name="Beisel K.W."/>
            <person name="Bersano T."/>
            <person name="Bono H."/>
            <person name="Chalk A.M."/>
            <person name="Chiu K.P."/>
            <person name="Choudhary V."/>
            <person name="Christoffels A."/>
            <person name="Clutterbuck D.R."/>
            <person name="Crowe M.L."/>
            <person name="Dalla E."/>
            <person name="Dalrymple B.P."/>
            <person name="de Bono B."/>
            <person name="Della Gatta G."/>
            <person name="di Bernardo D."/>
            <person name="Down T."/>
            <person name="Engstrom P."/>
            <person name="Fagiolini M."/>
            <person name="Faulkner G."/>
            <person name="Fletcher C.F."/>
            <person name="Fukushima T."/>
            <person name="Furuno M."/>
            <person name="Futaki S."/>
            <person name="Gariboldi M."/>
            <person name="Georgii-Hemming P."/>
            <person name="Gingeras T.R."/>
            <person name="Gojobori T."/>
            <person name="Green R.E."/>
            <person name="Gustincich S."/>
            <person name="Harbers M."/>
            <person name="Hayashi Y."/>
            <person name="Hensch T.K."/>
            <person name="Hirokawa N."/>
            <person name="Hill D."/>
            <person name="Huminiecki L."/>
            <person name="Iacono M."/>
            <person name="Ikeo K."/>
            <person name="Iwama A."/>
            <person name="Ishikawa T."/>
            <person name="Jakt M."/>
            <person name="Kanapin A."/>
            <person name="Katoh M."/>
            <person name="Kawasawa Y."/>
            <person name="Kelso J."/>
            <person name="Kitamura H."/>
            <person name="Kitano H."/>
            <person name="Kollias G."/>
            <person name="Krishnan S.P."/>
            <person name="Kruger A."/>
            <person name="Kummerfeld S.K."/>
            <person name="Kurochkin I.V."/>
            <person name="Lareau L.F."/>
            <person name="Lazarevic D."/>
            <person name="Lipovich L."/>
            <person name="Liu J."/>
            <person name="Liuni S."/>
            <person name="McWilliam S."/>
            <person name="Madan Babu M."/>
            <person name="Madera M."/>
            <person name="Marchionni L."/>
            <person name="Matsuda H."/>
            <person name="Matsuzawa S."/>
            <person name="Miki H."/>
            <person name="Mignone F."/>
            <person name="Miyake S."/>
            <person name="Morris K."/>
            <person name="Mottagui-Tabar S."/>
            <person name="Mulder N."/>
            <person name="Nakano N."/>
            <person name="Nakauchi H."/>
            <person name="Ng P."/>
            <person name="Nilsson R."/>
            <person name="Nishiguchi S."/>
            <person name="Nishikawa S."/>
            <person name="Nori F."/>
            <person name="Ohara O."/>
            <person name="Okazaki Y."/>
            <person name="Orlando V."/>
            <person name="Pang K.C."/>
            <person name="Pavan W.J."/>
            <person name="Pavesi G."/>
            <person name="Pesole G."/>
            <person name="Petrovsky N."/>
            <person name="Piazza S."/>
            <person name="Reed J."/>
            <person name="Reid J.F."/>
            <person name="Ring B.Z."/>
            <person name="Ringwald M."/>
            <person name="Rost B."/>
            <person name="Ruan Y."/>
            <person name="Salzberg S.L."/>
            <person name="Sandelin A."/>
            <person name="Schneider C."/>
            <person name="Schoenbach C."/>
            <person name="Sekiguchi K."/>
            <person name="Semple C.A."/>
            <person name="Seno S."/>
            <person name="Sessa L."/>
            <person name="Sheng Y."/>
            <person name="Shibata Y."/>
            <person name="Shimada H."/>
            <person name="Shimada K."/>
            <person name="Silva D."/>
            <person name="Sinclair B."/>
            <person name="Sperling S."/>
            <person name="Stupka E."/>
            <person name="Sugiura K."/>
            <person name="Sultana R."/>
            <person name="Takenaka Y."/>
            <person name="Taki K."/>
            <person name="Tammoja K."/>
            <person name="Tan S.L."/>
            <person name="Tang S."/>
            <person name="Taylor M.S."/>
            <person name="Tegner J."/>
            <person name="Teichmann S.A."/>
            <person name="Ueda H.R."/>
            <person name="van Nimwegen E."/>
            <person name="Verardo R."/>
            <person name="Wei C.L."/>
            <person name="Yagi K."/>
            <person name="Yamanishi H."/>
            <person name="Zabarovsky E."/>
            <person name="Zhu S."/>
            <person name="Zimmer A."/>
            <person name="Hide W."/>
            <person name="Bult C."/>
            <person name="Grimmond S.M."/>
            <person name="Teasdale R.D."/>
            <person name="Liu E.T."/>
            <person name="Brusic V."/>
            <person name="Quackenbush J."/>
            <person name="Wahlestedt C."/>
            <person name="Mattick J.S."/>
            <person name="Hume D.A."/>
            <person name="Kai C."/>
            <person name="Sasaki D."/>
            <person name="Tomaru Y."/>
            <person name="Fukuda S."/>
            <person name="Kanamori-Katayama M."/>
            <person name="Suzuki M."/>
            <person name="Aoki J."/>
            <person name="Arakawa T."/>
            <person name="Iida J."/>
            <person name="Imamura K."/>
            <person name="Itoh M."/>
            <person name="Kato T."/>
            <person name="Kawaji H."/>
            <person name="Kawagashira N."/>
            <person name="Kawashima T."/>
            <person name="Kojima M."/>
            <person name="Kondo S."/>
            <person name="Konno H."/>
            <person name="Nakano K."/>
            <person name="Ninomiya N."/>
            <person name="Nishio T."/>
            <person name="Okada M."/>
            <person name="Plessy C."/>
            <person name="Shibata K."/>
            <person name="Shiraki T."/>
            <person name="Suzuki S."/>
            <person name="Tagami M."/>
            <person name="Waki K."/>
            <person name="Watahiki A."/>
            <person name="Okamura-Oho Y."/>
            <person name="Suzuki H."/>
            <person name="Kawai J."/>
            <person name="Hayashizaki Y."/>
        </authorList>
    </citation>
    <scope>NUCLEOTIDE SEQUENCE [LARGE SCALE MRNA] (ISOFORM 1)</scope>
    <source>
        <strain>C57BL/6J</strain>
        <strain>Czech II</strain>
        <tissue>Bone marrow</tissue>
        <tissue>Embryo</tissue>
        <tissue>Embryonic spinal cord</tissue>
    </source>
</reference>
<reference key="2">
    <citation type="journal article" date="2004" name="Genome Res.">
        <title>The status, quality, and expansion of the NIH full-length cDNA project: the Mammalian Gene Collection (MGC).</title>
        <authorList>
            <consortium name="The MGC Project Team"/>
        </authorList>
    </citation>
    <scope>NUCLEOTIDE SEQUENCE [LARGE SCALE MRNA] (ISOFORMS 1 AND 2)</scope>
    <source>
        <strain>C57BL/6J</strain>
        <strain>NMRI</strain>
        <tissue>Blastocyst</tissue>
        <tissue>Mammary tumor</tissue>
    </source>
</reference>
<reference key="3">
    <citation type="journal article" date="2000" name="Curr. Biol.">
        <title>The p24 family member p23 is required for early embryonic development.</title>
        <authorList>
            <person name="Denzel A."/>
            <person name="Otto F."/>
            <person name="Girod A."/>
            <person name="Pepperkok R."/>
            <person name="Watson R."/>
            <person name="Rosewell I."/>
            <person name="Bergeron J.J."/>
            <person name="Solari R.C."/>
            <person name="Owen M.J."/>
        </authorList>
    </citation>
    <scope>SUBCELLULAR LOCATION</scope>
    <scope>DISRUPTION PHENOTYPE</scope>
</reference>
<reference key="4">
    <citation type="journal article" date="2007" name="J. Histochem. Cytochem.">
        <title>A subset of p23 localized on secretory granules in pancreatic beta-cells.</title>
        <authorList>
            <person name="Hosaka M."/>
            <person name="Watanabe T."/>
            <person name="Yamauchi Y."/>
            <person name="Sakai Y."/>
            <person name="Suda M."/>
            <person name="Mizutani S."/>
            <person name="Takeuchi T."/>
            <person name="Isobe T."/>
            <person name="Izumi T."/>
        </authorList>
    </citation>
    <scope>SUBCELLULAR LOCATION</scope>
</reference>
<reference key="5">
    <citation type="journal article" date="2010" name="Cell">
        <title>A tissue-specific atlas of mouse protein phosphorylation and expression.</title>
        <authorList>
            <person name="Huttlin E.L."/>
            <person name="Jedrychowski M.P."/>
            <person name="Elias J.E."/>
            <person name="Goswami T."/>
            <person name="Rad R."/>
            <person name="Beausoleil S.A."/>
            <person name="Villen J."/>
            <person name="Haas W."/>
            <person name="Sowa M.E."/>
            <person name="Gygi S.P."/>
        </authorList>
    </citation>
    <scope>IDENTIFICATION BY MASS SPECTROMETRY [LARGE SCALE ANALYSIS]</scope>
    <source>
        <tissue>Brain</tissue>
        <tissue>Brown adipose tissue</tissue>
        <tissue>Heart</tissue>
        <tissue>Kidney</tissue>
        <tissue>Liver</tissue>
        <tissue>Lung</tissue>
        <tissue>Pancreas</tissue>
        <tissue>Spleen</tissue>
        <tissue>Testis</tissue>
    </source>
</reference>
<reference key="6">
    <citation type="journal article" date="2020" name="Cell">
        <title>A Translocation Pathway for Vesicle-Mediated Unconventional Protein Secretion.</title>
        <authorList>
            <person name="Zhang M."/>
            <person name="Liu L."/>
            <person name="Lin X."/>
            <person name="Wang Y."/>
            <person name="Li Y."/>
            <person name="Guo Q."/>
            <person name="Li S."/>
            <person name="Sun Y."/>
            <person name="Tao X."/>
            <person name="Zhang D."/>
            <person name="Lv X."/>
            <person name="Zheng L."/>
            <person name="Ge L."/>
        </authorList>
    </citation>
    <scope>FUNCTION</scope>
    <scope>DISRUPTION PHENOTYPE</scope>
</reference>
<protein>
    <recommendedName>
        <fullName>Transmembrane emp24 domain-containing protein 10</fullName>
        <shortName>Protein Tmed10</shortName>
    </recommendedName>
    <alternativeName>
        <fullName>21 kDa transmembrane-trafficking protein</fullName>
    </alternativeName>
    <alternativeName>
        <fullName>Transmembrane protein Tmp21</fullName>
    </alternativeName>
    <alternativeName>
        <fullName>p24 family protein delta-1</fullName>
        <shortName>p24delta1</shortName>
    </alternativeName>
</protein>
<proteinExistence type="evidence at protein level"/>
<comment type="function">
    <text evidence="2 3 4">Cargo receptor involved in protein vesicular trafficking and quality control in the endoplasmic reticulum (ER) and Golgi. The p24 protein family is a group of transmembrane proteins that bind coat protein complex I/COPI and coat protein complex II/COPII involved in vesicular trafficking between the membranes. Acts at the lumenal side for incorporation of secretory cargo molecules into transport vesicles and involved in vesicle coat formation at the cytoplasmic side. Mainly functions in the early secretory pathway and cycles between the ER, ER-Golgi intermediate compartment (ERGIC) and Golgi, mediating cargo transport through COPI and COPII-coated vesicles. In COPII vesicle-mediated anterograde transport, involved in the transport of GPI-anchored proteins by acting together with TMED2 as their cargo receptor; the function specifically implies SEC24C and SEC24D of the COPII vesicle coat and lipid raft-like microdomains of the ER (By similarity). Recognizes GPI anchors structural remodeled in the ER by the GPI inositol-deacylase/PGAP1 and the metallophosphoesterase MPPE1/PGAP5 (By similarity). In COPI vesicle-mediated retrograde transport, involved in the biogenesis of COPI vesicles and vesicle coat recruitment. Involved in trafficking of amyloid beta A4 protein and soluble APP-beta release (independent from the modulation of gamma-secretase activity) (By similarity). Involved in the KDELR2-mediated retrograde transport of the toxin A subunit (CTX-A-K63)together with COPI and the COOH terminus of KDELR2 (By similarity). On Golgi membranes, acts as a primary receptor for ARF1-GDP, a GTP-binding protein involved in COPI-vesicle formation. Increases coatomer-dependent GTPase-activating activity of ARFGAP2 which mediates the hydrolysis of ARF1-bound GTP and therefore modulates protein trafficking from the Golgi apparatus. Involved in the exocytic trafficking of G protein-coupled receptors F2LR1/PAR2 (trypsin and tryspin-like enzyme receptor), OPRM1 (opioid receptor) and P2RY4 (UTD and UDP receptor) from the Golgi to the plasma membrane, thus contributing to receptor resensitization. In addition to its cargo receptor activity, may also act as a protein channel after oligomerization, facilitating the post-translational entry of leaderless cytoplasmic cargo into the ERGIC. Involved in the translocation into ERGIC, the vesicle entry and the secretion of leaderless cargos (lacking the secretion signal sequence), including the mature form of interleukin 1/IL-1 family members, the alpha-crystallin B chain HSPB5, the carbohydrate-binding proteins galectin-1/LGALS1 and galectin-3/LGALS3, the microtubule-associated protein Tau/MAPT, and the annexin A1/ANXA1; the translocation process is dependent on cargo protein unfolding and enhanced by chaperones HSP90AB1 and HSP90B1/GRP9. Could also associates with the presenilin-dependent gamma-secretase complex in order to regulate gamma-cleavages of the amyloid beta A4 protein to yield amyloid-beta 40/Abeta40 (By similarity).</text>
</comment>
<comment type="subunit">
    <text evidence="2 3 4">Predominantly dimeric and to a lesser extent monomeric in the ER. Monomer and dimer in ERGIC and cis-Golgi network. Forms homooligomer (via GOLD domain); the assembly is promoted by direct binding with leaderless cargos and may form a protein channel that facilitates cargo entry into the ERGIC. Forms heterooligomeric complexes with other members of the p24 family such as TMED2, TMED7 and TMED9. Interacts (via GOLD domain) with TMED2 (via GOLD domain); the complex is required for export of TMED10 from the ER to the cis-Golgi network; the complex is proposed to be involved in cis-Golgi network dynamics and / or biogenesis. Associates with the COPI vesicle coat subunits (coatomer) (By similarity). Tetramerization of the cytoplasmic domain at the Golgi membrane in vitro; the complex is proposed to interact with COPI coatomer and induce budding of the vesicles (By similarity). Interacts with COPG1; the interaction involves TMED10 homodimer. Interacts with ARF1 (GDP-bound); the interaction probably involves a TMED10 oligomer. Interacts with SEC23A, SEC24B, SEC24C and SEC24D components of the coat protein complex II/COPII, indicative of an association of TMED10 with the COPII vesicle coat. Interacts with CD59. Interacts with MPPE1/PGAP5; the complex might recruit and sort GPI-anchored proteins to the ER-exit site, or the interaction might lead to recycling of PGAP5 between the ER and the Golgi. Interacts with F2LR1/PAR2 (By similarity). Interacts with KDELR2/ERD2; the interaction is disrupted by KDELR2 ligand (By similarity). Found in a complex composed at least of SURF4, TMED2 and TMED10. Associates with the presenilin-dependent gamma-secretase complex. Interacts with STX17; the interaction is direct. Interacts with IL-1; the interaction is direct. Interacts with RAB21 (active GTP-bound form); the interaction is indirect and regulates TMED10 abundance and localization at the Golgi (By similarity).</text>
</comment>
<comment type="subcellular location">
    <subcellularLocation>
        <location evidence="2">Endoplasmic reticulum membrane</location>
        <topology evidence="5">Single-pass type I membrane protein</topology>
    </subcellularLocation>
    <subcellularLocation>
        <location evidence="2">Endoplasmic reticulum-Golgi intermediate compartment membrane</location>
        <topology evidence="5">Single-pass type I membrane protein</topology>
    </subcellularLocation>
    <subcellularLocation>
        <location evidence="7">Golgi apparatus membrane</location>
        <topology evidence="5">Single-pass type I membrane protein</topology>
    </subcellularLocation>
    <subcellularLocation>
        <location evidence="8">Golgi apparatus</location>
        <location evidence="8">cis-Golgi network membrane</location>
        <topology evidence="5">Single-pass type I membrane protein</topology>
    </subcellularLocation>
    <subcellularLocation>
        <location evidence="4">Golgi apparatus</location>
        <location evidence="4">trans-Golgi network membrane</location>
        <topology evidence="5">Single-pass type I membrane protein</topology>
    </subcellularLocation>
    <subcellularLocation>
        <location evidence="2">Cytoplasmic vesicle</location>
        <location evidence="2">Secretory vesicle membrane</location>
        <topology evidence="5">Single-pass type I membrane protein</topology>
    </subcellularLocation>
    <subcellularLocation>
        <location evidence="4">Cell membrane</location>
        <topology evidence="5">Single-pass type I membrane protein</topology>
    </subcellularLocation>
    <subcellularLocation>
        <location evidence="2">Melanosome</location>
    </subcellularLocation>
</comment>
<comment type="alternative products">
    <event type="alternative splicing"/>
    <isoform>
        <id>Q9D1D4-1</id>
        <name>1</name>
        <sequence type="displayed"/>
    </isoform>
    <isoform>
        <id>Q9D1D4-2</id>
        <name>2</name>
        <sequence type="described" ref="VSP_013582"/>
    </isoform>
</comment>
<comment type="domain">
    <text evidence="2">The GOLD domain is required for proper p24 heterooligomeric complex formation and efficient transport of GPI-anchored proteins.</text>
</comment>
<comment type="domain">
    <text evidence="4">The lumenal domain mediates localization to the plasma membrane by partially overriding the ER retention by the cytoplasmic domain.</text>
</comment>
<comment type="disruption phenotype">
    <text evidence="7 9">Early embryonic lethal. Decreases the protein but not the mRNA level of Tmed3 and Tmed9. Heterozygous Tmed10 +/- mice are viable but show structural deficits in the Golgi morphology, such as the formation of dilated saccules (PubMed:10660306). Conditional knockout mice show a increase in serum interleukin-1 beta (IL1B) and inflammation levels (PubMed:32272059).</text>
</comment>
<comment type="miscellaneous">
    <text evidence="2">Ectopic expression of TMED10 alone does not result in its proper cis-Golgi network localization. Interaction of TMED10 with TMED2 is both necessary and sufficient for transport of the couple to the cis-Golgi network, and TMED3 and/or TMED9 contribute to facilitating the process.</text>
</comment>
<comment type="similarity">
    <text evidence="11">Belongs to the EMP24/GP25L family.</text>
</comment>